<accession>Q6AAC8</accession>
<organism>
    <name type="scientific">Cutibacterium acnes (strain DSM 16379 / KPA171202)</name>
    <name type="common">Propionibacterium acnes</name>
    <dbReference type="NCBI Taxonomy" id="267747"/>
    <lineage>
        <taxon>Bacteria</taxon>
        <taxon>Bacillati</taxon>
        <taxon>Actinomycetota</taxon>
        <taxon>Actinomycetes</taxon>
        <taxon>Propionibacteriales</taxon>
        <taxon>Propionibacteriaceae</taxon>
        <taxon>Cutibacterium</taxon>
    </lineage>
</organism>
<name>RL25_CUTAK</name>
<gene>
    <name evidence="1" type="primary">rplY</name>
    <name evidence="1" type="synonym">ctc</name>
    <name type="ordered locus">PPA0535</name>
</gene>
<comment type="function">
    <text evidence="1">This is one of the proteins that binds to the 5S RNA in the ribosome where it forms part of the central protuberance.</text>
</comment>
<comment type="subunit">
    <text evidence="1">Part of the 50S ribosomal subunit; part of the 5S rRNA/L5/L18/L25 subcomplex. Contacts the 5S rRNA. Binds to the 5S rRNA independently of L5 and L18.</text>
</comment>
<comment type="similarity">
    <text evidence="1">Belongs to the bacterial ribosomal protein bL25 family. CTC subfamily.</text>
</comment>
<comment type="sequence caution" evidence="3">
    <conflict type="erroneous initiation">
        <sequence resource="EMBL-CDS" id="AAT82288"/>
    </conflict>
</comment>
<dbReference type="EMBL" id="AE017283">
    <property type="protein sequence ID" value="AAT82288.1"/>
    <property type="status" value="ALT_INIT"/>
    <property type="molecule type" value="Genomic_DNA"/>
</dbReference>
<dbReference type="RefSeq" id="WP_002516656.1">
    <property type="nucleotide sequence ID" value="NZ_CP025935.1"/>
</dbReference>
<dbReference type="PDB" id="8CRX">
    <property type="method" value="EM"/>
    <property type="resolution" value="2.78 A"/>
    <property type="chains" value="u=1-205"/>
</dbReference>
<dbReference type="PDB" id="8CVM">
    <property type="method" value="EM"/>
    <property type="resolution" value="2.66 A"/>
    <property type="chains" value="u=1-205"/>
</dbReference>
<dbReference type="PDBsum" id="8CRX"/>
<dbReference type="PDBsum" id="8CVM"/>
<dbReference type="SMR" id="Q6AAC8"/>
<dbReference type="EnsemblBacteria" id="AAT82288">
    <property type="protein sequence ID" value="AAT82288"/>
    <property type="gene ID" value="PPA0535"/>
</dbReference>
<dbReference type="KEGG" id="pac:PPA0535"/>
<dbReference type="eggNOG" id="COG1825">
    <property type="taxonomic scope" value="Bacteria"/>
</dbReference>
<dbReference type="HOGENOM" id="CLU_075939_1_0_11"/>
<dbReference type="Proteomes" id="UP000000603">
    <property type="component" value="Chromosome"/>
</dbReference>
<dbReference type="GO" id="GO:0022625">
    <property type="term" value="C:cytosolic large ribosomal subunit"/>
    <property type="evidence" value="ECO:0007669"/>
    <property type="project" value="TreeGrafter"/>
</dbReference>
<dbReference type="GO" id="GO:0008097">
    <property type="term" value="F:5S rRNA binding"/>
    <property type="evidence" value="ECO:0007669"/>
    <property type="project" value="InterPro"/>
</dbReference>
<dbReference type="GO" id="GO:0003735">
    <property type="term" value="F:structural constituent of ribosome"/>
    <property type="evidence" value="ECO:0007669"/>
    <property type="project" value="InterPro"/>
</dbReference>
<dbReference type="GO" id="GO:0006412">
    <property type="term" value="P:translation"/>
    <property type="evidence" value="ECO:0007669"/>
    <property type="project" value="UniProtKB-UniRule"/>
</dbReference>
<dbReference type="CDD" id="cd00495">
    <property type="entry name" value="Ribosomal_L25_TL5_CTC"/>
    <property type="match status" value="1"/>
</dbReference>
<dbReference type="Gene3D" id="2.170.120.20">
    <property type="entry name" value="Ribosomal protein L25, beta domain"/>
    <property type="match status" value="1"/>
</dbReference>
<dbReference type="Gene3D" id="2.40.240.10">
    <property type="entry name" value="Ribosomal Protein L25, Chain P"/>
    <property type="match status" value="1"/>
</dbReference>
<dbReference type="HAMAP" id="MF_01334">
    <property type="entry name" value="Ribosomal_bL25_CTC"/>
    <property type="match status" value="1"/>
</dbReference>
<dbReference type="InterPro" id="IPR020056">
    <property type="entry name" value="Rbsml_bL25/Gln-tRNA_synth_N"/>
</dbReference>
<dbReference type="InterPro" id="IPR011035">
    <property type="entry name" value="Ribosomal_bL25/Gln-tRNA_synth"/>
</dbReference>
<dbReference type="InterPro" id="IPR020057">
    <property type="entry name" value="Ribosomal_bL25_b-dom"/>
</dbReference>
<dbReference type="InterPro" id="IPR037121">
    <property type="entry name" value="Ribosomal_bL25_C"/>
</dbReference>
<dbReference type="InterPro" id="IPR001021">
    <property type="entry name" value="Ribosomal_bL25_long"/>
</dbReference>
<dbReference type="InterPro" id="IPR029751">
    <property type="entry name" value="Ribosomal_L25_dom"/>
</dbReference>
<dbReference type="InterPro" id="IPR020930">
    <property type="entry name" value="Ribosomal_uL5_bac-type"/>
</dbReference>
<dbReference type="NCBIfam" id="TIGR00731">
    <property type="entry name" value="bL25_bact_ctc"/>
    <property type="match status" value="1"/>
</dbReference>
<dbReference type="NCBIfam" id="NF004131">
    <property type="entry name" value="PRK05618.2-1"/>
    <property type="match status" value="1"/>
</dbReference>
<dbReference type="PANTHER" id="PTHR33284">
    <property type="entry name" value="RIBOSOMAL PROTEIN L25/GLN-TRNA SYNTHETASE, ANTI-CODON-BINDING DOMAIN-CONTAINING PROTEIN"/>
    <property type="match status" value="1"/>
</dbReference>
<dbReference type="PANTHER" id="PTHR33284:SF1">
    <property type="entry name" value="RIBOSOMAL PROTEIN L25_GLN-TRNA SYNTHETASE, ANTI-CODON-BINDING DOMAIN-CONTAINING PROTEIN"/>
    <property type="match status" value="1"/>
</dbReference>
<dbReference type="Pfam" id="PF01386">
    <property type="entry name" value="Ribosomal_L25p"/>
    <property type="match status" value="1"/>
</dbReference>
<dbReference type="Pfam" id="PF14693">
    <property type="entry name" value="Ribosomal_TL5_C"/>
    <property type="match status" value="1"/>
</dbReference>
<dbReference type="SUPFAM" id="SSF50715">
    <property type="entry name" value="Ribosomal protein L25-like"/>
    <property type="match status" value="1"/>
</dbReference>
<proteinExistence type="evidence at protein level"/>
<protein>
    <recommendedName>
        <fullName evidence="1">Large ribosomal subunit protein bL25</fullName>
    </recommendedName>
    <alternativeName>
        <fullName evidence="3">50S ribosomal protein L25</fullName>
    </alternativeName>
    <alternativeName>
        <fullName evidence="1">General stress protein CTC</fullName>
    </alternativeName>
</protein>
<keyword id="KW-0002">3D-structure</keyword>
<keyword id="KW-0687">Ribonucleoprotein</keyword>
<keyword id="KW-0689">Ribosomal protein</keyword>
<keyword id="KW-0694">RNA-binding</keyword>
<keyword id="KW-0699">rRNA-binding</keyword>
<evidence type="ECO:0000255" key="1">
    <source>
        <dbReference type="HAMAP-Rule" id="MF_01334"/>
    </source>
</evidence>
<evidence type="ECO:0000256" key="2">
    <source>
        <dbReference type="SAM" id="MobiDB-lite"/>
    </source>
</evidence>
<evidence type="ECO:0000305" key="3"/>
<evidence type="ECO:0007829" key="4">
    <source>
        <dbReference type="PDB" id="8CVM"/>
    </source>
</evidence>
<reference key="1">
    <citation type="journal article" date="2004" name="Science">
        <title>The complete genome sequence of Propionibacterium acnes, a commensal of human skin.</title>
        <authorList>
            <person name="Brueggemann H."/>
            <person name="Henne A."/>
            <person name="Hoster F."/>
            <person name="Liesegang H."/>
            <person name="Wiezer A."/>
            <person name="Strittmatter A."/>
            <person name="Hujer S."/>
            <person name="Duerre P."/>
            <person name="Gottschalk G."/>
        </authorList>
    </citation>
    <scope>NUCLEOTIDE SEQUENCE [LARGE SCALE GENOMIC DNA]</scope>
    <source>
        <strain>DSM 16379 / KPA171202</strain>
    </source>
</reference>
<sequence length="205" mass="22322">MADIIHLKAEQRTEFGKGAARRIRRDDKVPAVMYGHDHDPIHVTLDGHATLLALRTENPLLSIEIEGQKPMLALPKDVQRDVLKGFVRHVDLLTVRRGEKVDVNVALRITGESAPGTIAMTEFNEIEVQADLLNIPEVIEIDVTGLEAGTTIYLGDLKLPEGTSLLGDAEDVAATVAFPETEPVEDEESAGEDAQGESEEKAAKE</sequence>
<feature type="chain" id="PRO_0000181579" description="Large ribosomal subunit protein bL25">
    <location>
        <begin position="1"/>
        <end position="205"/>
    </location>
</feature>
<feature type="region of interest" description="Disordered" evidence="2">
    <location>
        <begin position="178"/>
        <end position="205"/>
    </location>
</feature>
<feature type="compositionally biased region" description="Acidic residues" evidence="2">
    <location>
        <begin position="182"/>
        <end position="197"/>
    </location>
</feature>
<feature type="strand" evidence="4">
    <location>
        <begin position="4"/>
        <end position="11"/>
    </location>
</feature>
<feature type="helix" evidence="4">
    <location>
        <begin position="17"/>
        <end position="25"/>
    </location>
</feature>
<feature type="strand" evidence="4">
    <location>
        <begin position="28"/>
        <end position="34"/>
    </location>
</feature>
<feature type="strand" evidence="4">
    <location>
        <begin position="36"/>
        <end position="38"/>
    </location>
</feature>
<feature type="strand" evidence="4">
    <location>
        <begin position="41"/>
        <end position="46"/>
    </location>
</feature>
<feature type="helix" evidence="4">
    <location>
        <begin position="47"/>
        <end position="54"/>
    </location>
</feature>
<feature type="strand" evidence="4">
    <location>
        <begin position="56"/>
        <end position="58"/>
    </location>
</feature>
<feature type="strand" evidence="4">
    <location>
        <begin position="60"/>
        <end position="64"/>
    </location>
</feature>
<feature type="strand" evidence="4">
    <location>
        <begin position="66"/>
        <end position="68"/>
    </location>
</feature>
<feature type="strand" evidence="4">
    <location>
        <begin position="71"/>
        <end position="80"/>
    </location>
</feature>
<feature type="strand" evidence="4">
    <location>
        <begin position="82"/>
        <end position="84"/>
    </location>
</feature>
<feature type="strand" evidence="4">
    <location>
        <begin position="87"/>
        <end position="94"/>
    </location>
</feature>
<feature type="strand" evidence="4">
    <location>
        <begin position="100"/>
        <end position="109"/>
    </location>
</feature>
<feature type="strand" evidence="4">
    <location>
        <begin position="118"/>
        <end position="122"/>
    </location>
</feature>
<feature type="strand" evidence="4">
    <location>
        <begin position="124"/>
        <end position="131"/>
    </location>
</feature>
<feature type="strand" evidence="4">
    <location>
        <begin position="137"/>
        <end position="141"/>
    </location>
</feature>
<feature type="strand" evidence="4">
    <location>
        <begin position="151"/>
        <end position="153"/>
    </location>
</feature>
<feature type="strand" evidence="4">
    <location>
        <begin position="169"/>
        <end position="177"/>
    </location>
</feature>